<proteinExistence type="evidence at protein level"/>
<reference key="1">
    <citation type="journal article" date="1996" name="Science">
        <title>Complete genome sequence of the methanogenic archaeon, Methanococcus jannaschii.</title>
        <authorList>
            <person name="Bult C.J."/>
            <person name="White O."/>
            <person name="Olsen G.J."/>
            <person name="Zhou L."/>
            <person name="Fleischmann R.D."/>
            <person name="Sutton G.G."/>
            <person name="Blake J.A."/>
            <person name="FitzGerald L.M."/>
            <person name="Clayton R.A."/>
            <person name="Gocayne J.D."/>
            <person name="Kerlavage A.R."/>
            <person name="Dougherty B.A."/>
            <person name="Tomb J.-F."/>
            <person name="Adams M.D."/>
            <person name="Reich C.I."/>
            <person name="Overbeek R."/>
            <person name="Kirkness E.F."/>
            <person name="Weinstock K.G."/>
            <person name="Merrick J.M."/>
            <person name="Glodek A."/>
            <person name="Scott J.L."/>
            <person name="Geoghagen N.S.M."/>
            <person name="Weidman J.F."/>
            <person name="Fuhrmann J.L."/>
            <person name="Nguyen D."/>
            <person name="Utterback T.R."/>
            <person name="Kelley J.M."/>
            <person name="Peterson J.D."/>
            <person name="Sadow P.W."/>
            <person name="Hanna M.C."/>
            <person name="Cotton M.D."/>
            <person name="Roberts K.M."/>
            <person name="Hurst M.A."/>
            <person name="Kaine B.P."/>
            <person name="Borodovsky M."/>
            <person name="Klenk H.-P."/>
            <person name="Fraser C.M."/>
            <person name="Smith H.O."/>
            <person name="Woese C.R."/>
            <person name="Venter J.C."/>
        </authorList>
    </citation>
    <scope>NUCLEOTIDE SEQUENCE [LARGE SCALE GENOMIC DNA]</scope>
    <source>
        <strain>ATCC 43067 / DSM 2661 / JAL-1 / JCM 10045 / NBRC 100440</strain>
    </source>
</reference>
<reference key="2">
    <citation type="journal article" date="2006" name="Biochemistry">
        <title>Methylglyoxal is an intermediate in the biosynthesis of 6-deoxy-5-ketofructose-1-phosphate: a precursor for aromatic amino acid biosynthesis in Methanocaldococcus jannaschii.</title>
        <authorList>
            <person name="White R.H."/>
            <person name="Xu H."/>
        </authorList>
    </citation>
    <scope>FUNCTION AS A FRUCTOSE-BISPHOSPHATE ALDOLASE AND DKFP SYNTHASE</scope>
    <scope>CATALYTIC ACTIVITY</scope>
</reference>
<gene>
    <name type="ordered locus">MJ1585</name>
</gene>
<keyword id="KW-0456">Lyase</keyword>
<keyword id="KW-1185">Reference proteome</keyword>
<keyword id="KW-0704">Schiff base</keyword>
<keyword id="KW-0808">Transferase</keyword>
<comment type="function">
    <text evidence="2">Catalyzes the transaldolization of either fructose-1-P or fructose-1,6-bisphosphate with methylglyoxal to produce 6-deoxy-5-ketofructose-1-phosphate (DKFP). Also catalyzes the reversible aldol condensation of dihydroxyacetone phosphate (DHAP or glycerone-phosphate) with glyceraldehyde 3-phosphate (G3P or GAP) to produce fructose 1,6-bisphosphate (FBP).</text>
</comment>
<comment type="catalytic activity">
    <reaction evidence="2">
        <text>beta-D-fructose 1,6-bisphosphate = D-glyceraldehyde 3-phosphate + dihydroxyacetone phosphate</text>
        <dbReference type="Rhea" id="RHEA:14729"/>
        <dbReference type="ChEBI" id="CHEBI:32966"/>
        <dbReference type="ChEBI" id="CHEBI:57642"/>
        <dbReference type="ChEBI" id="CHEBI:59776"/>
        <dbReference type="EC" id="4.1.2.13"/>
    </reaction>
</comment>
<comment type="catalytic activity">
    <reaction evidence="2">
        <text>beta-D-fructose 1,6-bisphosphate + methylglyoxal = 1-deoxy-D-threo-hexo-2,5-diulose 6-phosphate + D-glyceraldehyde 3-phosphate</text>
        <dbReference type="Rhea" id="RHEA:31911"/>
        <dbReference type="ChEBI" id="CHEBI:17158"/>
        <dbReference type="ChEBI" id="CHEBI:32966"/>
        <dbReference type="ChEBI" id="CHEBI:58861"/>
        <dbReference type="ChEBI" id="CHEBI:59776"/>
        <dbReference type="EC" id="2.2.1.11"/>
    </reaction>
</comment>
<comment type="catalytic activity">
    <reaction evidence="2">
        <text>beta-D-fructose 1-phosphate + methylglyoxal = 1-deoxy-D-threo-hexo-2,5-diulose 6-phosphate + D-glyceraldehyde</text>
        <dbReference type="Rhea" id="RHEA:32259"/>
        <dbReference type="ChEBI" id="CHEBI:17158"/>
        <dbReference type="ChEBI" id="CHEBI:17378"/>
        <dbReference type="ChEBI" id="CHEBI:58861"/>
        <dbReference type="ChEBI" id="CHEBI:138881"/>
        <dbReference type="EC" id="2.2.1.11"/>
    </reaction>
</comment>
<comment type="pathway">
    <text>Aromatic compound metabolism.</text>
</comment>
<comment type="similarity">
    <text evidence="3">Belongs to the DeoC/FbaB aldolase family.</text>
</comment>
<accession>Q58980</accession>
<dbReference type="EC" id="2.2.1.11" evidence="2"/>
<dbReference type="EC" id="4.1.2.13" evidence="2"/>
<dbReference type="EMBL" id="L77117">
    <property type="protein sequence ID" value="AAB99604.1"/>
    <property type="molecule type" value="Genomic_DNA"/>
</dbReference>
<dbReference type="PIR" id="H64497">
    <property type="entry name" value="H64497"/>
</dbReference>
<dbReference type="SMR" id="Q58980"/>
<dbReference type="FunCoup" id="Q58980">
    <property type="interactions" value="161"/>
</dbReference>
<dbReference type="STRING" id="243232.MJ_1585"/>
<dbReference type="PaxDb" id="243232-MJ_1585"/>
<dbReference type="EnsemblBacteria" id="AAB99604">
    <property type="protein sequence ID" value="AAB99604"/>
    <property type="gene ID" value="MJ_1585"/>
</dbReference>
<dbReference type="KEGG" id="mja:MJ_1585"/>
<dbReference type="eggNOG" id="arCOG04044">
    <property type="taxonomic scope" value="Archaea"/>
</dbReference>
<dbReference type="HOGENOM" id="CLU_057069_2_2_2"/>
<dbReference type="InParanoid" id="Q58980"/>
<dbReference type="PhylomeDB" id="Q58980"/>
<dbReference type="BioCyc" id="MetaCyc:MONOMER-14590"/>
<dbReference type="BRENDA" id="2.2.1.11">
    <property type="organism ID" value="3260"/>
</dbReference>
<dbReference type="Proteomes" id="UP000000805">
    <property type="component" value="Chromosome"/>
</dbReference>
<dbReference type="GO" id="GO:0004332">
    <property type="term" value="F:fructose-bisphosphate aldolase activity"/>
    <property type="evidence" value="ECO:0000314"/>
    <property type="project" value="UniProtKB"/>
</dbReference>
<dbReference type="GO" id="GO:0016744">
    <property type="term" value="F:transketolase or transaldolase activity"/>
    <property type="evidence" value="ECO:0000314"/>
    <property type="project" value="UniProtKB"/>
</dbReference>
<dbReference type="CDD" id="cd00958">
    <property type="entry name" value="DhnA"/>
    <property type="match status" value="1"/>
</dbReference>
<dbReference type="Gene3D" id="3.20.20.70">
    <property type="entry name" value="Aldolase class I"/>
    <property type="match status" value="1"/>
</dbReference>
<dbReference type="InterPro" id="IPR013785">
    <property type="entry name" value="Aldolase_TIM"/>
</dbReference>
<dbReference type="InterPro" id="IPR002915">
    <property type="entry name" value="DeoC/FbaB/LacD_aldolase"/>
</dbReference>
<dbReference type="InterPro" id="IPR050456">
    <property type="entry name" value="DeoC/FbaB_aldolase"/>
</dbReference>
<dbReference type="InterPro" id="IPR041720">
    <property type="entry name" value="FbaB-like"/>
</dbReference>
<dbReference type="NCBIfam" id="NF005321">
    <property type="entry name" value="PRK06852.1"/>
    <property type="match status" value="1"/>
</dbReference>
<dbReference type="PANTHER" id="PTHR47916">
    <property type="entry name" value="FRUCTOSE-BISPHOSPHATE ALDOLASE CLASS 1"/>
    <property type="match status" value="1"/>
</dbReference>
<dbReference type="PANTHER" id="PTHR47916:SF4">
    <property type="entry name" value="FRUCTOSE-BISPHOSPHATE ALDOLASE CLASS 1"/>
    <property type="match status" value="1"/>
</dbReference>
<dbReference type="Pfam" id="PF01791">
    <property type="entry name" value="DeoC"/>
    <property type="match status" value="1"/>
</dbReference>
<dbReference type="PIRSF" id="PIRSF038992">
    <property type="entry name" value="Aldolase_Ia"/>
    <property type="match status" value="1"/>
</dbReference>
<dbReference type="SMART" id="SM01133">
    <property type="entry name" value="DeoC"/>
    <property type="match status" value="1"/>
</dbReference>
<dbReference type="SUPFAM" id="SSF51569">
    <property type="entry name" value="Aldolase"/>
    <property type="match status" value="1"/>
</dbReference>
<evidence type="ECO:0000250" key="1"/>
<evidence type="ECO:0000269" key="2">
    <source>
    </source>
</evidence>
<evidence type="ECO:0000305" key="3"/>
<sequence>MGIFMIKRLKKRDVKVPLTVPEDRKEEYIKNYLELTKRTGNVMLFAGDQKIEHLNDDFFGEGIAKDDASPEHLFNIASKGKICGFATQLGLIARYGMDYKKIPYIVKINSKTHLVKTRDPISRALVHVKDVVDLKENSGLKILGVGYTIYPGSEYEHIMFEEASRVILEAHKHGLIAIIWSYPRGKNVKDEKDPHLIAGAAGVAACLGADFVKVNYPKCDNPAERFKEAVLAAGRTGVLCAGGKSIEPEKFLKQIWEQINISGARGNATGRNIHQKPLDAAIRMCNAIYAITIEGKSLEEALKIYYGDRK</sequence>
<feature type="chain" id="PRO_0000138958" description="Fructose-bisphosphate aldolase/6-deoxy-5-ketofructose 1-phosphate synthase">
    <location>
        <begin position="1"/>
        <end position="310"/>
    </location>
</feature>
<feature type="active site" description="Proton donor" evidence="1">
    <location>
        <position position="182"/>
    </location>
</feature>
<feature type="active site" description="Schiff-base intermediate with dihydroxyacetone-P" evidence="1">
    <location>
        <position position="213"/>
    </location>
</feature>
<feature type="active site" description="Schiff-base intermediate with substrate" evidence="1">
    <location>
        <position position="213"/>
    </location>
</feature>
<feature type="binding site" evidence="1">
    <location>
        <begin position="48"/>
        <end position="49"/>
    </location>
    <ligand>
        <name>substrate</name>
    </ligand>
</feature>
<feature type="binding site" evidence="1">
    <location>
        <position position="53"/>
    </location>
    <ligand>
        <name>substrate</name>
    </ligand>
</feature>
<feature type="binding site" evidence="1">
    <location>
        <position position="57"/>
    </location>
    <ligand>
        <name>substrate</name>
    </ligand>
</feature>
<feature type="binding site" evidence="1">
    <location>
        <position position="180"/>
    </location>
    <ligand>
        <name>substrate</name>
    </ligand>
</feature>
<feature type="binding site" evidence="1">
    <location>
        <position position="184"/>
    </location>
    <ligand>
        <name>substrate</name>
    </ligand>
</feature>
<feature type="binding site" evidence="1">
    <location>
        <begin position="213"/>
        <end position="215"/>
    </location>
    <ligand>
        <name>substrate</name>
    </ligand>
</feature>
<feature type="binding site" evidence="1">
    <location>
        <begin position="241"/>
        <end position="243"/>
    </location>
    <ligand>
        <name>substrate</name>
    </ligand>
</feature>
<feature type="binding site" evidence="1">
    <location>
        <begin position="270"/>
        <end position="271"/>
    </location>
    <ligand>
        <name>substrate</name>
    </ligand>
</feature>
<organism>
    <name type="scientific">Methanocaldococcus jannaschii (strain ATCC 43067 / DSM 2661 / JAL-1 / JCM 10045 / NBRC 100440)</name>
    <name type="common">Methanococcus jannaschii</name>
    <dbReference type="NCBI Taxonomy" id="243232"/>
    <lineage>
        <taxon>Archaea</taxon>
        <taxon>Methanobacteriati</taxon>
        <taxon>Methanobacteriota</taxon>
        <taxon>Methanomada group</taxon>
        <taxon>Methanococci</taxon>
        <taxon>Methanococcales</taxon>
        <taxon>Methanocaldococcaceae</taxon>
        <taxon>Methanocaldococcus</taxon>
    </lineage>
</organism>
<protein>
    <recommendedName>
        <fullName>Fructose-bisphosphate aldolase/6-deoxy-5-ketofructose 1-phosphate synthase</fullName>
        <ecNumber evidence="2">2.2.1.11</ecNumber>
        <ecNumber evidence="2">4.1.2.13</ecNumber>
    </recommendedName>
    <alternativeName>
        <fullName>DKFP synthase</fullName>
    </alternativeName>
    <alternativeName>
        <fullName>Fructose-bisphosphate aldolase class 1</fullName>
    </alternativeName>
    <alternativeName>
        <fullName>Fructose-bisphosphate aldolase class I</fullName>
        <shortName>FBP aldolase</shortName>
    </alternativeName>
</protein>
<name>DKFP_METJA</name>